<organism>
    <name type="scientific">Synechococcus sp. (strain CC9605)</name>
    <dbReference type="NCBI Taxonomy" id="110662"/>
    <lineage>
        <taxon>Bacteria</taxon>
        <taxon>Bacillati</taxon>
        <taxon>Cyanobacteriota</taxon>
        <taxon>Cyanophyceae</taxon>
        <taxon>Synechococcales</taxon>
        <taxon>Synechococcaceae</taxon>
        <taxon>Synechococcus</taxon>
    </lineage>
</organism>
<sequence length="372" mass="40761">MFGFEINAHCANTSARCGTFETPHGPVNTPRFMPVGTLATVKGISTEQLGRTGAQMVLSNTYHLHLQPGEEIVAAAGGLHRFMGWNGPMLTDSGGFQVFSLGDLNKIDDRGVVFRNPRDGRTIDMTPEHATQIQMALGADVAMAFDQCPPYPATENDVIDACRRTHAWLERCVTAHTREDQALFGIVQGGCFPHLRRESAMAVASFDLPGTAVGGVSVGEPAEEMHRIVRDVTPLLPSHKPRYLMGIGTLREMAIAVANGIDLFDCVLPTRLGRHGTVLVGGERWNLRNARFRHDHTPLDPSCSCVACTGHTRAYLHHLIRSEELLGLTLLSIHNITQLVRFTSAMAQAIRDGCFSEDFAPWEPDSPAHHTW</sequence>
<comment type="function">
    <text evidence="1">Catalyzes the base-exchange of a guanine (G) residue with the queuine precursor 7-aminomethyl-7-deazaguanine (PreQ1) at position 34 (anticodon wobble position) in tRNAs with GU(N) anticodons (tRNA-Asp, -Asn, -His and -Tyr). Catalysis occurs through a double-displacement mechanism. The nucleophile active site attacks the C1' of nucleotide 34 to detach the guanine base from the RNA, forming a covalent enzyme-RNA intermediate. The proton acceptor active site deprotonates the incoming PreQ1, allowing a nucleophilic attack on the C1' of the ribose to form the product. After dissociation, two additional enzymatic reactions on the tRNA convert PreQ1 to queuine (Q), resulting in the hypermodified nucleoside queuosine (7-(((4,5-cis-dihydroxy-2-cyclopenten-1-yl)amino)methyl)-7-deazaguanosine).</text>
</comment>
<comment type="catalytic activity">
    <reaction evidence="1">
        <text>7-aminomethyl-7-carbaguanine + guanosine(34) in tRNA = 7-aminomethyl-7-carbaguanosine(34) in tRNA + guanine</text>
        <dbReference type="Rhea" id="RHEA:24104"/>
        <dbReference type="Rhea" id="RHEA-COMP:10341"/>
        <dbReference type="Rhea" id="RHEA-COMP:10342"/>
        <dbReference type="ChEBI" id="CHEBI:16235"/>
        <dbReference type="ChEBI" id="CHEBI:58703"/>
        <dbReference type="ChEBI" id="CHEBI:74269"/>
        <dbReference type="ChEBI" id="CHEBI:82833"/>
        <dbReference type="EC" id="2.4.2.29"/>
    </reaction>
</comment>
<comment type="cofactor">
    <cofactor evidence="1">
        <name>Zn(2+)</name>
        <dbReference type="ChEBI" id="CHEBI:29105"/>
    </cofactor>
    <text evidence="1">Binds 1 zinc ion per subunit.</text>
</comment>
<comment type="pathway">
    <text evidence="1">tRNA modification; tRNA-queuosine biosynthesis.</text>
</comment>
<comment type="subunit">
    <text evidence="1">Homodimer. Within each dimer, one monomer is responsible for RNA recognition and catalysis, while the other monomer binds to the replacement base PreQ1.</text>
</comment>
<comment type="similarity">
    <text evidence="1">Belongs to the queuine tRNA-ribosyltransferase family.</text>
</comment>
<protein>
    <recommendedName>
        <fullName evidence="1">Queuine tRNA-ribosyltransferase</fullName>
        <ecNumber evidence="1">2.4.2.29</ecNumber>
    </recommendedName>
    <alternativeName>
        <fullName evidence="1">Guanine insertion enzyme</fullName>
    </alternativeName>
    <alternativeName>
        <fullName evidence="1">tRNA-guanine transglycosylase</fullName>
    </alternativeName>
</protein>
<evidence type="ECO:0000255" key="1">
    <source>
        <dbReference type="HAMAP-Rule" id="MF_00168"/>
    </source>
</evidence>
<dbReference type="EC" id="2.4.2.29" evidence="1"/>
<dbReference type="EMBL" id="CP000110">
    <property type="protein sequence ID" value="ABB34014.1"/>
    <property type="molecule type" value="Genomic_DNA"/>
</dbReference>
<dbReference type="RefSeq" id="WP_011363268.1">
    <property type="nucleotide sequence ID" value="NC_007516.1"/>
</dbReference>
<dbReference type="SMR" id="Q3AN18"/>
<dbReference type="STRING" id="110662.Syncc9605_0238"/>
<dbReference type="KEGG" id="syd:Syncc9605_0238"/>
<dbReference type="eggNOG" id="COG0343">
    <property type="taxonomic scope" value="Bacteria"/>
</dbReference>
<dbReference type="HOGENOM" id="CLU_022060_0_1_3"/>
<dbReference type="OrthoDB" id="9805417at2"/>
<dbReference type="UniPathway" id="UPA00392"/>
<dbReference type="GO" id="GO:0005829">
    <property type="term" value="C:cytosol"/>
    <property type="evidence" value="ECO:0007669"/>
    <property type="project" value="TreeGrafter"/>
</dbReference>
<dbReference type="GO" id="GO:0046872">
    <property type="term" value="F:metal ion binding"/>
    <property type="evidence" value="ECO:0007669"/>
    <property type="project" value="UniProtKB-KW"/>
</dbReference>
<dbReference type="GO" id="GO:0008479">
    <property type="term" value="F:tRNA-guanosine(34) queuine transglycosylase activity"/>
    <property type="evidence" value="ECO:0007669"/>
    <property type="project" value="UniProtKB-UniRule"/>
</dbReference>
<dbReference type="GO" id="GO:0008616">
    <property type="term" value="P:queuosine biosynthetic process"/>
    <property type="evidence" value="ECO:0007669"/>
    <property type="project" value="UniProtKB-UniRule"/>
</dbReference>
<dbReference type="GO" id="GO:0002099">
    <property type="term" value="P:tRNA wobble guanine modification"/>
    <property type="evidence" value="ECO:0007669"/>
    <property type="project" value="TreeGrafter"/>
</dbReference>
<dbReference type="GO" id="GO:0101030">
    <property type="term" value="P:tRNA-guanine transglycosylation"/>
    <property type="evidence" value="ECO:0007669"/>
    <property type="project" value="InterPro"/>
</dbReference>
<dbReference type="Gene3D" id="3.20.20.105">
    <property type="entry name" value="Queuine tRNA-ribosyltransferase-like"/>
    <property type="match status" value="1"/>
</dbReference>
<dbReference type="HAMAP" id="MF_00168">
    <property type="entry name" value="Q_tRNA_Tgt"/>
    <property type="match status" value="1"/>
</dbReference>
<dbReference type="InterPro" id="IPR050076">
    <property type="entry name" value="ArchSynthase1/Queuine_TRR"/>
</dbReference>
<dbReference type="InterPro" id="IPR004803">
    <property type="entry name" value="TGT"/>
</dbReference>
<dbReference type="InterPro" id="IPR036511">
    <property type="entry name" value="TGT-like_sf"/>
</dbReference>
<dbReference type="InterPro" id="IPR002616">
    <property type="entry name" value="tRNA_ribo_trans-like"/>
</dbReference>
<dbReference type="NCBIfam" id="TIGR00430">
    <property type="entry name" value="Q_tRNA_tgt"/>
    <property type="match status" value="1"/>
</dbReference>
<dbReference type="NCBIfam" id="TIGR00449">
    <property type="entry name" value="tgt_general"/>
    <property type="match status" value="1"/>
</dbReference>
<dbReference type="PANTHER" id="PTHR46499">
    <property type="entry name" value="QUEUINE TRNA-RIBOSYLTRANSFERASE"/>
    <property type="match status" value="1"/>
</dbReference>
<dbReference type="PANTHER" id="PTHR46499:SF1">
    <property type="entry name" value="QUEUINE TRNA-RIBOSYLTRANSFERASE"/>
    <property type="match status" value="1"/>
</dbReference>
<dbReference type="Pfam" id="PF01702">
    <property type="entry name" value="TGT"/>
    <property type="match status" value="1"/>
</dbReference>
<dbReference type="SUPFAM" id="SSF51713">
    <property type="entry name" value="tRNA-guanine transglycosylase"/>
    <property type="match status" value="1"/>
</dbReference>
<name>TGT_SYNSC</name>
<gene>
    <name evidence="1" type="primary">tgt</name>
    <name type="ordered locus">Syncc9605_0238</name>
</gene>
<keyword id="KW-0328">Glycosyltransferase</keyword>
<keyword id="KW-0479">Metal-binding</keyword>
<keyword id="KW-0671">Queuosine biosynthesis</keyword>
<keyword id="KW-0808">Transferase</keyword>
<keyword id="KW-0819">tRNA processing</keyword>
<keyword id="KW-0862">Zinc</keyword>
<feature type="chain" id="PRO_1000016883" description="Queuine tRNA-ribosyltransferase">
    <location>
        <begin position="1"/>
        <end position="372"/>
    </location>
</feature>
<feature type="region of interest" description="RNA binding" evidence="1">
    <location>
        <begin position="246"/>
        <end position="252"/>
    </location>
</feature>
<feature type="region of interest" description="RNA binding; important for wobble base 34 recognition" evidence="1">
    <location>
        <begin position="270"/>
        <end position="274"/>
    </location>
</feature>
<feature type="active site" description="Proton acceptor" evidence="1">
    <location>
        <position position="92"/>
    </location>
</feature>
<feature type="active site" description="Nucleophile" evidence="1">
    <location>
        <position position="265"/>
    </location>
</feature>
<feature type="binding site" evidence="1">
    <location>
        <begin position="92"/>
        <end position="96"/>
    </location>
    <ligand>
        <name>substrate</name>
    </ligand>
</feature>
<feature type="binding site" evidence="1">
    <location>
        <position position="146"/>
    </location>
    <ligand>
        <name>substrate</name>
    </ligand>
</feature>
<feature type="binding site" evidence="1">
    <location>
        <position position="188"/>
    </location>
    <ligand>
        <name>substrate</name>
    </ligand>
</feature>
<feature type="binding site" evidence="1">
    <location>
        <position position="215"/>
    </location>
    <ligand>
        <name>substrate</name>
    </ligand>
</feature>
<feature type="binding site" evidence="1">
    <location>
        <position position="303"/>
    </location>
    <ligand>
        <name>Zn(2+)</name>
        <dbReference type="ChEBI" id="CHEBI:29105"/>
    </ligand>
</feature>
<feature type="binding site" evidence="1">
    <location>
        <position position="305"/>
    </location>
    <ligand>
        <name>Zn(2+)</name>
        <dbReference type="ChEBI" id="CHEBI:29105"/>
    </ligand>
</feature>
<feature type="binding site" evidence="1">
    <location>
        <position position="308"/>
    </location>
    <ligand>
        <name>Zn(2+)</name>
        <dbReference type="ChEBI" id="CHEBI:29105"/>
    </ligand>
</feature>
<feature type="binding site" evidence="1">
    <location>
        <position position="334"/>
    </location>
    <ligand>
        <name>Zn(2+)</name>
        <dbReference type="ChEBI" id="CHEBI:29105"/>
    </ligand>
</feature>
<reference key="1">
    <citation type="submission" date="2005-07" db="EMBL/GenBank/DDBJ databases">
        <title>Complete sequence of Synechococcus sp. CC9605.</title>
        <authorList>
            <consortium name="US DOE Joint Genome Institute"/>
            <person name="Copeland A."/>
            <person name="Lucas S."/>
            <person name="Lapidus A."/>
            <person name="Barry K."/>
            <person name="Detter J.C."/>
            <person name="Glavina T."/>
            <person name="Hammon N."/>
            <person name="Israni S."/>
            <person name="Pitluck S."/>
            <person name="Schmutz J."/>
            <person name="Martinez M."/>
            <person name="Larimer F."/>
            <person name="Land M."/>
            <person name="Kyrpides N."/>
            <person name="Ivanova N."/>
            <person name="Richardson P."/>
        </authorList>
    </citation>
    <scope>NUCLEOTIDE SEQUENCE [LARGE SCALE GENOMIC DNA]</scope>
    <source>
        <strain>CC9605</strain>
    </source>
</reference>
<accession>Q3AN18</accession>
<proteinExistence type="inferred from homology"/>